<sequence>MGKTIGLTGSVATGKSTVSSMIQQAGIPLVDADIAARKVVEPGTEGLKEIVAYFGEEILLADGTLNRAKLGKIIFKDKEKREKLNEITHPRVKEYMLEARERFFRAGEELVFFDIPLLFESHLESLVDQIIVVWTTPETELKRLMERNNLTKEEALARINSQIGIDEKAKKADFVINNNESLEKTQKQVYTFIERFVKNK</sequence>
<comment type="function">
    <text evidence="1">Catalyzes the phosphorylation of the 3'-hydroxyl group of dephosphocoenzyme A to form coenzyme A.</text>
</comment>
<comment type="catalytic activity">
    <reaction evidence="1">
        <text>3'-dephospho-CoA + ATP = ADP + CoA + H(+)</text>
        <dbReference type="Rhea" id="RHEA:18245"/>
        <dbReference type="ChEBI" id="CHEBI:15378"/>
        <dbReference type="ChEBI" id="CHEBI:30616"/>
        <dbReference type="ChEBI" id="CHEBI:57287"/>
        <dbReference type="ChEBI" id="CHEBI:57328"/>
        <dbReference type="ChEBI" id="CHEBI:456216"/>
        <dbReference type="EC" id="2.7.1.24"/>
    </reaction>
</comment>
<comment type="pathway">
    <text evidence="1">Cofactor biosynthesis; coenzyme A biosynthesis; CoA from (R)-pantothenate: step 5/5.</text>
</comment>
<comment type="subcellular location">
    <subcellularLocation>
        <location evidence="1">Cytoplasm</location>
    </subcellularLocation>
</comment>
<comment type="similarity">
    <text evidence="1">Belongs to the CoaE family.</text>
</comment>
<keyword id="KW-0067">ATP-binding</keyword>
<keyword id="KW-0173">Coenzyme A biosynthesis</keyword>
<keyword id="KW-0963">Cytoplasm</keyword>
<keyword id="KW-0418">Kinase</keyword>
<keyword id="KW-0547">Nucleotide-binding</keyword>
<keyword id="KW-1185">Reference proteome</keyword>
<keyword id="KW-0808">Transferase</keyword>
<name>COAE_LISMO</name>
<feature type="chain" id="PRO_0000172959" description="Dephospho-CoA kinase">
    <location>
        <begin position="1"/>
        <end position="200"/>
    </location>
</feature>
<feature type="domain" description="DPCK" evidence="1">
    <location>
        <begin position="4"/>
        <end position="200"/>
    </location>
</feature>
<feature type="binding site" evidence="1">
    <location>
        <begin position="12"/>
        <end position="17"/>
    </location>
    <ligand>
        <name>ATP</name>
        <dbReference type="ChEBI" id="CHEBI:30616"/>
    </ligand>
</feature>
<accession>Q8Y6W8</accession>
<proteinExistence type="inferred from homology"/>
<reference key="1">
    <citation type="journal article" date="2001" name="Science">
        <title>Comparative genomics of Listeria species.</title>
        <authorList>
            <person name="Glaser P."/>
            <person name="Frangeul L."/>
            <person name="Buchrieser C."/>
            <person name="Rusniok C."/>
            <person name="Amend A."/>
            <person name="Baquero F."/>
            <person name="Berche P."/>
            <person name="Bloecker H."/>
            <person name="Brandt P."/>
            <person name="Chakraborty T."/>
            <person name="Charbit A."/>
            <person name="Chetouani F."/>
            <person name="Couve E."/>
            <person name="de Daruvar A."/>
            <person name="Dehoux P."/>
            <person name="Domann E."/>
            <person name="Dominguez-Bernal G."/>
            <person name="Duchaud E."/>
            <person name="Durant L."/>
            <person name="Dussurget O."/>
            <person name="Entian K.-D."/>
            <person name="Fsihi H."/>
            <person name="Garcia-del Portillo F."/>
            <person name="Garrido P."/>
            <person name="Gautier L."/>
            <person name="Goebel W."/>
            <person name="Gomez-Lopez N."/>
            <person name="Hain T."/>
            <person name="Hauf J."/>
            <person name="Jackson D."/>
            <person name="Jones L.-M."/>
            <person name="Kaerst U."/>
            <person name="Kreft J."/>
            <person name="Kuhn M."/>
            <person name="Kunst F."/>
            <person name="Kurapkat G."/>
            <person name="Madueno E."/>
            <person name="Maitournam A."/>
            <person name="Mata Vicente J."/>
            <person name="Ng E."/>
            <person name="Nedjari H."/>
            <person name="Nordsiek G."/>
            <person name="Novella S."/>
            <person name="de Pablos B."/>
            <person name="Perez-Diaz J.-C."/>
            <person name="Purcell R."/>
            <person name="Remmel B."/>
            <person name="Rose M."/>
            <person name="Schlueter T."/>
            <person name="Simoes N."/>
            <person name="Tierrez A."/>
            <person name="Vazquez-Boland J.-A."/>
            <person name="Voss H."/>
            <person name="Wehland J."/>
            <person name="Cossart P."/>
        </authorList>
    </citation>
    <scope>NUCLEOTIDE SEQUENCE [LARGE SCALE GENOMIC DNA]</scope>
    <source>
        <strain>ATCC BAA-679 / EGD-e</strain>
    </source>
</reference>
<organism>
    <name type="scientific">Listeria monocytogenes serovar 1/2a (strain ATCC BAA-679 / EGD-e)</name>
    <dbReference type="NCBI Taxonomy" id="169963"/>
    <lineage>
        <taxon>Bacteria</taxon>
        <taxon>Bacillati</taxon>
        <taxon>Bacillota</taxon>
        <taxon>Bacilli</taxon>
        <taxon>Bacillales</taxon>
        <taxon>Listeriaceae</taxon>
        <taxon>Listeria</taxon>
    </lineage>
</organism>
<dbReference type="EC" id="2.7.1.24" evidence="1"/>
<dbReference type="EMBL" id="AL591979">
    <property type="protein sequence ID" value="CAC99641.1"/>
    <property type="molecule type" value="Genomic_DNA"/>
</dbReference>
<dbReference type="PIR" id="AC1270">
    <property type="entry name" value="AC1270"/>
</dbReference>
<dbReference type="RefSeq" id="NP_465088.1">
    <property type="nucleotide sequence ID" value="NC_003210.1"/>
</dbReference>
<dbReference type="RefSeq" id="WP_009926374.1">
    <property type="nucleotide sequence ID" value="NZ_CP149495.1"/>
</dbReference>
<dbReference type="SMR" id="Q8Y6W8"/>
<dbReference type="STRING" id="169963.gene:17594220"/>
<dbReference type="PaxDb" id="169963-lmo1563"/>
<dbReference type="EnsemblBacteria" id="CAC99641">
    <property type="protein sequence ID" value="CAC99641"/>
    <property type="gene ID" value="CAC99641"/>
</dbReference>
<dbReference type="GeneID" id="986899"/>
<dbReference type="KEGG" id="lmo:lmo1563"/>
<dbReference type="PATRIC" id="fig|169963.11.peg.1604"/>
<dbReference type="eggNOG" id="COG0237">
    <property type="taxonomic scope" value="Bacteria"/>
</dbReference>
<dbReference type="HOGENOM" id="CLU_057180_0_0_9"/>
<dbReference type="OrthoDB" id="9812943at2"/>
<dbReference type="PhylomeDB" id="Q8Y6W8"/>
<dbReference type="BioCyc" id="LMON169963:LMO1563-MONOMER"/>
<dbReference type="UniPathway" id="UPA00241">
    <property type="reaction ID" value="UER00356"/>
</dbReference>
<dbReference type="Proteomes" id="UP000000817">
    <property type="component" value="Chromosome"/>
</dbReference>
<dbReference type="GO" id="GO:0005737">
    <property type="term" value="C:cytoplasm"/>
    <property type="evidence" value="ECO:0007669"/>
    <property type="project" value="UniProtKB-SubCell"/>
</dbReference>
<dbReference type="GO" id="GO:0005524">
    <property type="term" value="F:ATP binding"/>
    <property type="evidence" value="ECO:0007669"/>
    <property type="project" value="UniProtKB-UniRule"/>
</dbReference>
<dbReference type="GO" id="GO:0004140">
    <property type="term" value="F:dephospho-CoA kinase activity"/>
    <property type="evidence" value="ECO:0000318"/>
    <property type="project" value="GO_Central"/>
</dbReference>
<dbReference type="GO" id="GO:0015937">
    <property type="term" value="P:coenzyme A biosynthetic process"/>
    <property type="evidence" value="ECO:0000318"/>
    <property type="project" value="GO_Central"/>
</dbReference>
<dbReference type="CDD" id="cd02022">
    <property type="entry name" value="DPCK"/>
    <property type="match status" value="1"/>
</dbReference>
<dbReference type="FunFam" id="3.40.50.300:FF:002910">
    <property type="entry name" value="Dephospho-CoA kinase"/>
    <property type="match status" value="1"/>
</dbReference>
<dbReference type="Gene3D" id="3.40.50.300">
    <property type="entry name" value="P-loop containing nucleotide triphosphate hydrolases"/>
    <property type="match status" value="1"/>
</dbReference>
<dbReference type="HAMAP" id="MF_00376">
    <property type="entry name" value="Dephospho_CoA_kinase"/>
    <property type="match status" value="1"/>
</dbReference>
<dbReference type="InterPro" id="IPR001977">
    <property type="entry name" value="Depp_CoAkinase"/>
</dbReference>
<dbReference type="InterPro" id="IPR027417">
    <property type="entry name" value="P-loop_NTPase"/>
</dbReference>
<dbReference type="NCBIfam" id="TIGR00152">
    <property type="entry name" value="dephospho-CoA kinase"/>
    <property type="match status" value="1"/>
</dbReference>
<dbReference type="PANTHER" id="PTHR10695:SF46">
    <property type="entry name" value="BIFUNCTIONAL COENZYME A SYNTHASE-RELATED"/>
    <property type="match status" value="1"/>
</dbReference>
<dbReference type="PANTHER" id="PTHR10695">
    <property type="entry name" value="DEPHOSPHO-COA KINASE-RELATED"/>
    <property type="match status" value="1"/>
</dbReference>
<dbReference type="Pfam" id="PF01121">
    <property type="entry name" value="CoaE"/>
    <property type="match status" value="1"/>
</dbReference>
<dbReference type="SUPFAM" id="SSF52540">
    <property type="entry name" value="P-loop containing nucleoside triphosphate hydrolases"/>
    <property type="match status" value="1"/>
</dbReference>
<dbReference type="PROSITE" id="PS51219">
    <property type="entry name" value="DPCK"/>
    <property type="match status" value="1"/>
</dbReference>
<protein>
    <recommendedName>
        <fullName evidence="1">Dephospho-CoA kinase</fullName>
        <ecNumber evidence="1">2.7.1.24</ecNumber>
    </recommendedName>
    <alternativeName>
        <fullName evidence="1">Dephosphocoenzyme A kinase</fullName>
    </alternativeName>
</protein>
<evidence type="ECO:0000255" key="1">
    <source>
        <dbReference type="HAMAP-Rule" id="MF_00376"/>
    </source>
</evidence>
<gene>
    <name evidence="1" type="primary">coaE</name>
    <name type="ordered locus">lmo1563</name>
</gene>